<keyword id="KW-0963">Cytoplasm</keyword>
<keyword id="KW-0238">DNA-binding</keyword>
<accession>A3M5B7</accession>
<evidence type="ECO:0000255" key="1">
    <source>
        <dbReference type="HAMAP-Rule" id="MF_00274"/>
    </source>
</evidence>
<reference key="1">
    <citation type="journal article" date="2007" name="Genes Dev.">
        <title>New insights into Acinetobacter baumannii pathogenesis revealed by high-density pyrosequencing and transposon mutagenesis.</title>
        <authorList>
            <person name="Smith M.G."/>
            <person name="Gianoulis T.A."/>
            <person name="Pukatzki S."/>
            <person name="Mekalanos J.J."/>
            <person name="Ornston L.N."/>
            <person name="Gerstein M."/>
            <person name="Snyder M."/>
        </authorList>
    </citation>
    <scope>NUCLEOTIDE SEQUENCE [LARGE SCALE GENOMIC DNA]</scope>
    <source>
        <strain>ATCC 17978 / DSM 105126 / CIP 53.77 / LMG 1025 / NCDC KC755 / 5377</strain>
    </source>
</reference>
<protein>
    <recommendedName>
        <fullName evidence="1">Nucleoid-associated protein A1S_1684</fullName>
    </recommendedName>
</protein>
<name>Y1684_ACIBT</name>
<organism>
    <name type="scientific">Acinetobacter baumannii (strain ATCC 17978 / DSM 105126 / CIP 53.77 / LMG 1025 / NCDC KC755 / 5377)</name>
    <dbReference type="NCBI Taxonomy" id="400667"/>
    <lineage>
        <taxon>Bacteria</taxon>
        <taxon>Pseudomonadati</taxon>
        <taxon>Pseudomonadota</taxon>
        <taxon>Gammaproteobacteria</taxon>
        <taxon>Moraxellales</taxon>
        <taxon>Moraxellaceae</taxon>
        <taxon>Acinetobacter</taxon>
        <taxon>Acinetobacter calcoaceticus/baumannii complex</taxon>
    </lineage>
</organism>
<dbReference type="EMBL" id="CP000521">
    <property type="protein sequence ID" value="ABO12111.2"/>
    <property type="molecule type" value="Genomic_DNA"/>
</dbReference>
<dbReference type="RefSeq" id="WP_001024697.1">
    <property type="nucleotide sequence ID" value="NZ_CP053098.1"/>
</dbReference>
<dbReference type="SMR" id="A3M5B7"/>
<dbReference type="KEGG" id="acb:A1S_1684"/>
<dbReference type="HOGENOM" id="CLU_140930_0_0_6"/>
<dbReference type="GO" id="GO:0043590">
    <property type="term" value="C:bacterial nucleoid"/>
    <property type="evidence" value="ECO:0007669"/>
    <property type="project" value="UniProtKB-UniRule"/>
</dbReference>
<dbReference type="GO" id="GO:0005829">
    <property type="term" value="C:cytosol"/>
    <property type="evidence" value="ECO:0007669"/>
    <property type="project" value="TreeGrafter"/>
</dbReference>
<dbReference type="GO" id="GO:0003677">
    <property type="term" value="F:DNA binding"/>
    <property type="evidence" value="ECO:0007669"/>
    <property type="project" value="UniProtKB-UniRule"/>
</dbReference>
<dbReference type="Gene3D" id="3.30.1310.10">
    <property type="entry name" value="Nucleoid-associated protein YbaB-like domain"/>
    <property type="match status" value="1"/>
</dbReference>
<dbReference type="HAMAP" id="MF_00274">
    <property type="entry name" value="DNA_YbaB_EbfC"/>
    <property type="match status" value="1"/>
</dbReference>
<dbReference type="InterPro" id="IPR036894">
    <property type="entry name" value="YbaB-like_sf"/>
</dbReference>
<dbReference type="InterPro" id="IPR004401">
    <property type="entry name" value="YbaB/EbfC"/>
</dbReference>
<dbReference type="NCBIfam" id="TIGR00103">
    <property type="entry name" value="DNA_YbaB_EbfC"/>
    <property type="match status" value="1"/>
</dbReference>
<dbReference type="PANTHER" id="PTHR33449">
    <property type="entry name" value="NUCLEOID-ASSOCIATED PROTEIN YBAB"/>
    <property type="match status" value="1"/>
</dbReference>
<dbReference type="PANTHER" id="PTHR33449:SF1">
    <property type="entry name" value="NUCLEOID-ASSOCIATED PROTEIN YBAB"/>
    <property type="match status" value="1"/>
</dbReference>
<dbReference type="Pfam" id="PF02575">
    <property type="entry name" value="YbaB_DNA_bd"/>
    <property type="match status" value="1"/>
</dbReference>
<dbReference type="PIRSF" id="PIRSF004555">
    <property type="entry name" value="UCP004555"/>
    <property type="match status" value="1"/>
</dbReference>
<dbReference type="SUPFAM" id="SSF82607">
    <property type="entry name" value="YbaB-like"/>
    <property type="match status" value="1"/>
</dbReference>
<gene>
    <name type="ordered locus">A1S_1684</name>
</gene>
<sequence length="109" mass="12015">MNINMLMQQAQRMQKDMESNIKKAKEELAQTEVHAEAGGGLVKVTMTGRYIVKRIEINPELLQDEPDMIEDLIAAAVNDAVRQAEVVSEEKMQKANSGMGLPPGLAGMF</sequence>
<proteinExistence type="inferred from homology"/>
<comment type="function">
    <text evidence="1">Binds to DNA and alters its conformation. May be involved in regulation of gene expression, nucleoid organization and DNA protection.</text>
</comment>
<comment type="subunit">
    <text evidence="1">Homodimer.</text>
</comment>
<comment type="subcellular location">
    <subcellularLocation>
        <location evidence="1">Cytoplasm</location>
        <location evidence="1">Nucleoid</location>
    </subcellularLocation>
</comment>
<comment type="similarity">
    <text evidence="1">Belongs to the YbaB/EbfC family.</text>
</comment>
<feature type="chain" id="PRO_1000114573" description="Nucleoid-associated protein A1S_1684">
    <location>
        <begin position="1"/>
        <end position="109"/>
    </location>
</feature>